<reference key="1">
    <citation type="journal article" date="2008" name="DNA Res.">
        <title>Comparative genome analysis of Lactobacillus reuteri and Lactobacillus fermentum reveal a genomic island for reuterin and cobalamin production.</title>
        <authorList>
            <person name="Morita H."/>
            <person name="Toh H."/>
            <person name="Fukuda S."/>
            <person name="Horikawa H."/>
            <person name="Oshima K."/>
            <person name="Suzuki T."/>
            <person name="Murakami M."/>
            <person name="Hisamatsu S."/>
            <person name="Kato Y."/>
            <person name="Takizawa T."/>
            <person name="Fukuoka H."/>
            <person name="Yoshimura T."/>
            <person name="Itoh K."/>
            <person name="O'Sullivan D.J."/>
            <person name="McKay L.L."/>
            <person name="Ohno H."/>
            <person name="Kikuchi J."/>
            <person name="Masaoka T."/>
            <person name="Hattori M."/>
        </authorList>
    </citation>
    <scope>NUCLEOTIDE SEQUENCE [LARGE SCALE GENOMIC DNA]</scope>
    <source>
        <strain>NBRC 3956 / LMG 18251</strain>
    </source>
</reference>
<dbReference type="EMBL" id="AP008937">
    <property type="protein sequence ID" value="BAG27853.1"/>
    <property type="molecule type" value="Genomic_DNA"/>
</dbReference>
<dbReference type="RefSeq" id="WP_003681566.1">
    <property type="nucleotide sequence ID" value="NC_010610.1"/>
</dbReference>
<dbReference type="SMR" id="B2GDX1"/>
<dbReference type="GeneID" id="83716106"/>
<dbReference type="KEGG" id="lfe:LAF_1517"/>
<dbReference type="eggNOG" id="COG0480">
    <property type="taxonomic scope" value="Bacteria"/>
</dbReference>
<dbReference type="HOGENOM" id="CLU_002794_4_1_9"/>
<dbReference type="Proteomes" id="UP000001697">
    <property type="component" value="Chromosome"/>
</dbReference>
<dbReference type="GO" id="GO:0005737">
    <property type="term" value="C:cytoplasm"/>
    <property type="evidence" value="ECO:0007669"/>
    <property type="project" value="UniProtKB-SubCell"/>
</dbReference>
<dbReference type="GO" id="GO:0005525">
    <property type="term" value="F:GTP binding"/>
    <property type="evidence" value="ECO:0007669"/>
    <property type="project" value="UniProtKB-UniRule"/>
</dbReference>
<dbReference type="GO" id="GO:0003924">
    <property type="term" value="F:GTPase activity"/>
    <property type="evidence" value="ECO:0007669"/>
    <property type="project" value="InterPro"/>
</dbReference>
<dbReference type="GO" id="GO:0003746">
    <property type="term" value="F:translation elongation factor activity"/>
    <property type="evidence" value="ECO:0007669"/>
    <property type="project" value="UniProtKB-UniRule"/>
</dbReference>
<dbReference type="GO" id="GO:0032790">
    <property type="term" value="P:ribosome disassembly"/>
    <property type="evidence" value="ECO:0007669"/>
    <property type="project" value="TreeGrafter"/>
</dbReference>
<dbReference type="CDD" id="cd01886">
    <property type="entry name" value="EF-G"/>
    <property type="match status" value="1"/>
</dbReference>
<dbReference type="CDD" id="cd16262">
    <property type="entry name" value="EFG_III"/>
    <property type="match status" value="1"/>
</dbReference>
<dbReference type="CDD" id="cd01434">
    <property type="entry name" value="EFG_mtEFG1_IV"/>
    <property type="match status" value="1"/>
</dbReference>
<dbReference type="CDD" id="cd03713">
    <property type="entry name" value="EFG_mtEFG_C"/>
    <property type="match status" value="1"/>
</dbReference>
<dbReference type="CDD" id="cd04088">
    <property type="entry name" value="EFG_mtEFG_II"/>
    <property type="match status" value="1"/>
</dbReference>
<dbReference type="FunFam" id="2.40.30.10:FF:000006">
    <property type="entry name" value="Elongation factor G"/>
    <property type="match status" value="1"/>
</dbReference>
<dbReference type="FunFam" id="3.30.230.10:FF:000003">
    <property type="entry name" value="Elongation factor G"/>
    <property type="match status" value="1"/>
</dbReference>
<dbReference type="FunFam" id="3.30.70.240:FF:000001">
    <property type="entry name" value="Elongation factor G"/>
    <property type="match status" value="1"/>
</dbReference>
<dbReference type="FunFam" id="3.30.70.870:FF:000001">
    <property type="entry name" value="Elongation factor G"/>
    <property type="match status" value="1"/>
</dbReference>
<dbReference type="FunFam" id="3.40.50.300:FF:000029">
    <property type="entry name" value="Elongation factor G"/>
    <property type="match status" value="1"/>
</dbReference>
<dbReference type="Gene3D" id="3.30.230.10">
    <property type="match status" value="1"/>
</dbReference>
<dbReference type="Gene3D" id="3.30.70.240">
    <property type="match status" value="1"/>
</dbReference>
<dbReference type="Gene3D" id="3.30.70.870">
    <property type="entry name" value="Elongation Factor G (Translational Gtpase), domain 3"/>
    <property type="match status" value="1"/>
</dbReference>
<dbReference type="Gene3D" id="3.40.50.300">
    <property type="entry name" value="P-loop containing nucleotide triphosphate hydrolases"/>
    <property type="match status" value="1"/>
</dbReference>
<dbReference type="Gene3D" id="2.40.30.10">
    <property type="entry name" value="Translation factors"/>
    <property type="match status" value="1"/>
</dbReference>
<dbReference type="HAMAP" id="MF_00054_B">
    <property type="entry name" value="EF_G_EF_2_B"/>
    <property type="match status" value="1"/>
</dbReference>
<dbReference type="InterPro" id="IPR053905">
    <property type="entry name" value="EF-G-like_DII"/>
</dbReference>
<dbReference type="InterPro" id="IPR041095">
    <property type="entry name" value="EFG_II"/>
</dbReference>
<dbReference type="InterPro" id="IPR009022">
    <property type="entry name" value="EFG_III"/>
</dbReference>
<dbReference type="InterPro" id="IPR035647">
    <property type="entry name" value="EFG_III/V"/>
</dbReference>
<dbReference type="InterPro" id="IPR047872">
    <property type="entry name" value="EFG_IV"/>
</dbReference>
<dbReference type="InterPro" id="IPR035649">
    <property type="entry name" value="EFG_V"/>
</dbReference>
<dbReference type="InterPro" id="IPR000640">
    <property type="entry name" value="EFG_V-like"/>
</dbReference>
<dbReference type="InterPro" id="IPR031157">
    <property type="entry name" value="G_TR_CS"/>
</dbReference>
<dbReference type="InterPro" id="IPR027417">
    <property type="entry name" value="P-loop_NTPase"/>
</dbReference>
<dbReference type="InterPro" id="IPR020568">
    <property type="entry name" value="Ribosomal_Su5_D2-typ_SF"/>
</dbReference>
<dbReference type="InterPro" id="IPR014721">
    <property type="entry name" value="Ribsml_uS5_D2-typ_fold_subgr"/>
</dbReference>
<dbReference type="InterPro" id="IPR005225">
    <property type="entry name" value="Small_GTP-bd"/>
</dbReference>
<dbReference type="InterPro" id="IPR000795">
    <property type="entry name" value="T_Tr_GTP-bd_dom"/>
</dbReference>
<dbReference type="InterPro" id="IPR009000">
    <property type="entry name" value="Transl_B-barrel_sf"/>
</dbReference>
<dbReference type="InterPro" id="IPR004540">
    <property type="entry name" value="Transl_elong_EFG/EF2"/>
</dbReference>
<dbReference type="InterPro" id="IPR005517">
    <property type="entry name" value="Transl_elong_EFG/EF2_IV"/>
</dbReference>
<dbReference type="NCBIfam" id="TIGR00484">
    <property type="entry name" value="EF-G"/>
    <property type="match status" value="1"/>
</dbReference>
<dbReference type="NCBIfam" id="NF009379">
    <property type="entry name" value="PRK12740.1-3"/>
    <property type="match status" value="1"/>
</dbReference>
<dbReference type="NCBIfam" id="NF009381">
    <property type="entry name" value="PRK12740.1-5"/>
    <property type="match status" value="1"/>
</dbReference>
<dbReference type="NCBIfam" id="TIGR00231">
    <property type="entry name" value="small_GTP"/>
    <property type="match status" value="1"/>
</dbReference>
<dbReference type="PANTHER" id="PTHR43261:SF1">
    <property type="entry name" value="RIBOSOME-RELEASING FACTOR 2, MITOCHONDRIAL"/>
    <property type="match status" value="1"/>
</dbReference>
<dbReference type="PANTHER" id="PTHR43261">
    <property type="entry name" value="TRANSLATION ELONGATION FACTOR G-RELATED"/>
    <property type="match status" value="1"/>
</dbReference>
<dbReference type="Pfam" id="PF22042">
    <property type="entry name" value="EF-G_D2"/>
    <property type="match status" value="1"/>
</dbReference>
<dbReference type="Pfam" id="PF00679">
    <property type="entry name" value="EFG_C"/>
    <property type="match status" value="1"/>
</dbReference>
<dbReference type="Pfam" id="PF14492">
    <property type="entry name" value="EFG_III"/>
    <property type="match status" value="1"/>
</dbReference>
<dbReference type="Pfam" id="PF03764">
    <property type="entry name" value="EFG_IV"/>
    <property type="match status" value="1"/>
</dbReference>
<dbReference type="Pfam" id="PF00009">
    <property type="entry name" value="GTP_EFTU"/>
    <property type="match status" value="1"/>
</dbReference>
<dbReference type="PRINTS" id="PR00315">
    <property type="entry name" value="ELONGATNFCT"/>
</dbReference>
<dbReference type="SMART" id="SM00838">
    <property type="entry name" value="EFG_C"/>
    <property type="match status" value="1"/>
</dbReference>
<dbReference type="SMART" id="SM00889">
    <property type="entry name" value="EFG_IV"/>
    <property type="match status" value="1"/>
</dbReference>
<dbReference type="SUPFAM" id="SSF54980">
    <property type="entry name" value="EF-G C-terminal domain-like"/>
    <property type="match status" value="2"/>
</dbReference>
<dbReference type="SUPFAM" id="SSF52540">
    <property type="entry name" value="P-loop containing nucleoside triphosphate hydrolases"/>
    <property type="match status" value="1"/>
</dbReference>
<dbReference type="SUPFAM" id="SSF54211">
    <property type="entry name" value="Ribosomal protein S5 domain 2-like"/>
    <property type="match status" value="1"/>
</dbReference>
<dbReference type="SUPFAM" id="SSF50447">
    <property type="entry name" value="Translation proteins"/>
    <property type="match status" value="1"/>
</dbReference>
<dbReference type="PROSITE" id="PS00301">
    <property type="entry name" value="G_TR_1"/>
    <property type="match status" value="1"/>
</dbReference>
<dbReference type="PROSITE" id="PS51722">
    <property type="entry name" value="G_TR_2"/>
    <property type="match status" value="1"/>
</dbReference>
<sequence length="694" mass="76352">MANKREYPLEKTRNIGIMAHIDAGKTTATERILYYTGKIHKIGETHDGASQMDWMEEEKERGITITSAATTAVWKDTRINIIDTPGHVDFTVEVERALRVLDGAVTVLDAQAGVEPQTETVWRQADDFNVPRLVFANKMDKMGANFDYSVKTIKERLNVTPLPIQMPIGAEDEFAGVIDLVKMVAYIYDEDKLGENWDTVEIPADMKDEAESRHDAMIETLADVNDDIMEKYLEGAEISVDEIKAAIRQATLDQELFPVMAGSAYKDKGIQMMLDAVLDYLPSPVDVKPFVAHDEEGNAIELTAGDDKPFAALAFKIATDPFVGRLTFLRVYTGSLKSGSYVLNATKGKRERIGRLLQMHSNQQNEISEVFSGDIAAAIGLKNTTTGDSLTDPDHPLQLESMDFPEPVIQVSVEPKSKADQDKMDKGLQKLAEEDPTFKAETNPETGETLIAGMGELHLDIIVERLRREFNAEVTVGKPQVSYREAFTKQVSAQGKFVRQSGGKGQYGDVWIEFTPLEEGAGFEFEDAIVGGVVPREYIPAVEQGLKEAMENGVLAGYPLVDLHAKLYDGSYHEVDSSEAAFKVAASLALRNAAPKGGAVILEPIMKVDIVAPEDNLGDVMGHVTARRGSIDGMEERGNAQLVHSFVPLSEMFGYATTLRSATQGRGTFTMTFDHYSAVPKSIQEEIIEKNGGK</sequence>
<comment type="function">
    <text evidence="1">Catalyzes the GTP-dependent ribosomal translocation step during translation elongation. During this step, the ribosome changes from the pre-translocational (PRE) to the post-translocational (POST) state as the newly formed A-site-bound peptidyl-tRNA and P-site-bound deacylated tRNA move to the P and E sites, respectively. Catalyzes the coordinated movement of the two tRNA molecules, the mRNA and conformational changes in the ribosome.</text>
</comment>
<comment type="subcellular location">
    <subcellularLocation>
        <location evidence="1">Cytoplasm</location>
    </subcellularLocation>
</comment>
<comment type="similarity">
    <text evidence="1">Belongs to the TRAFAC class translation factor GTPase superfamily. Classic translation factor GTPase family. EF-G/EF-2 subfamily.</text>
</comment>
<evidence type="ECO:0000255" key="1">
    <source>
        <dbReference type="HAMAP-Rule" id="MF_00054"/>
    </source>
</evidence>
<gene>
    <name evidence="1" type="primary">fusA</name>
    <name type="ordered locus">LAF_1517</name>
</gene>
<proteinExistence type="inferred from homology"/>
<feature type="chain" id="PRO_1000091726" description="Elongation factor G">
    <location>
        <begin position="1"/>
        <end position="694"/>
    </location>
</feature>
<feature type="domain" description="tr-type G">
    <location>
        <begin position="10"/>
        <end position="285"/>
    </location>
</feature>
<feature type="binding site" evidence="1">
    <location>
        <begin position="19"/>
        <end position="26"/>
    </location>
    <ligand>
        <name>GTP</name>
        <dbReference type="ChEBI" id="CHEBI:37565"/>
    </ligand>
</feature>
<feature type="binding site" evidence="1">
    <location>
        <begin position="83"/>
        <end position="87"/>
    </location>
    <ligand>
        <name>GTP</name>
        <dbReference type="ChEBI" id="CHEBI:37565"/>
    </ligand>
</feature>
<feature type="binding site" evidence="1">
    <location>
        <begin position="137"/>
        <end position="140"/>
    </location>
    <ligand>
        <name>GTP</name>
        <dbReference type="ChEBI" id="CHEBI:37565"/>
    </ligand>
</feature>
<name>EFG_LIMF3</name>
<accession>B2GDX1</accession>
<keyword id="KW-0963">Cytoplasm</keyword>
<keyword id="KW-0251">Elongation factor</keyword>
<keyword id="KW-0342">GTP-binding</keyword>
<keyword id="KW-0547">Nucleotide-binding</keyword>
<keyword id="KW-0648">Protein biosynthesis</keyword>
<keyword id="KW-1185">Reference proteome</keyword>
<organism>
    <name type="scientific">Limosilactobacillus fermentum (strain NBRC 3956 / LMG 18251)</name>
    <name type="common">Lactobacillus fermentum</name>
    <dbReference type="NCBI Taxonomy" id="334390"/>
    <lineage>
        <taxon>Bacteria</taxon>
        <taxon>Bacillati</taxon>
        <taxon>Bacillota</taxon>
        <taxon>Bacilli</taxon>
        <taxon>Lactobacillales</taxon>
        <taxon>Lactobacillaceae</taxon>
        <taxon>Limosilactobacillus</taxon>
    </lineage>
</organism>
<protein>
    <recommendedName>
        <fullName evidence="1">Elongation factor G</fullName>
        <shortName evidence="1">EF-G</shortName>
    </recommendedName>
</protein>